<dbReference type="EMBL" id="CP000053">
    <property type="protein sequence ID" value="AAY61322.1"/>
    <property type="molecule type" value="Genomic_DNA"/>
</dbReference>
<dbReference type="SMR" id="Q4UM95"/>
<dbReference type="STRING" id="315456.RF_0471"/>
<dbReference type="KEGG" id="rfe:RF_0471"/>
<dbReference type="eggNOG" id="COG4695">
    <property type="taxonomic scope" value="Bacteria"/>
</dbReference>
<dbReference type="HOGENOM" id="CLU_054516_0_0_5"/>
<dbReference type="OrthoDB" id="9134461at2"/>
<dbReference type="Proteomes" id="UP000008548">
    <property type="component" value="Chromosome"/>
</dbReference>
<dbReference type="InterPro" id="IPR006944">
    <property type="entry name" value="Phage/GTA_portal"/>
</dbReference>
<dbReference type="InterPro" id="IPR006427">
    <property type="entry name" value="Portal_HK97"/>
</dbReference>
<dbReference type="NCBIfam" id="TIGR01537">
    <property type="entry name" value="portal_HK97"/>
    <property type="match status" value="1"/>
</dbReference>
<dbReference type="Pfam" id="PF04860">
    <property type="entry name" value="Phage_portal"/>
    <property type="match status" value="1"/>
</dbReference>
<protein>
    <recommendedName>
        <fullName>Uncharacterized protein RF_0471</fullName>
    </recommendedName>
</protein>
<proteinExistence type="inferred from homology"/>
<feature type="chain" id="PRO_0000280987" description="Uncharacterized protein RF_0471">
    <location>
        <begin position="1"/>
        <end position="385"/>
    </location>
</feature>
<organism>
    <name type="scientific">Rickettsia felis (strain ATCC VR-1525 / URRWXCal2)</name>
    <name type="common">Rickettsia azadi</name>
    <dbReference type="NCBI Taxonomy" id="315456"/>
    <lineage>
        <taxon>Bacteria</taxon>
        <taxon>Pseudomonadati</taxon>
        <taxon>Pseudomonadota</taxon>
        <taxon>Alphaproteobacteria</taxon>
        <taxon>Rickettsiales</taxon>
        <taxon>Rickettsiaceae</taxon>
        <taxon>Rickettsieae</taxon>
        <taxon>Rickettsia</taxon>
        <taxon>spotted fever group</taxon>
    </lineage>
</organism>
<name>Y471_RICFE</name>
<comment type="similarity">
    <text evidence="1">Belongs to the phage portal family. HK97 subfamily.</text>
</comment>
<sequence>MIKNYWKKFWKNSTTKSQNFIELNDIAYGNLKRVKVGIEAYRENVIVYRCINLIAQSAGHVPWKVLKSRTGEVISELPVHYLLKRPNPEKAGVDFFSELIASKLLFGNSYILSTLDSYPKEIYLLPALATELVIEHDNLVAYRYKSSKGDRIYKIDHIAKMSRVLHLKNYHPLDQHYGLSCLEAASLPIDLHQQSFYWNHSLLQNGARPSGALIVKDSNGYLSDEQFERLQAQLSEKFSGNSNAGKPLLLEEGLGWQEMSINPKDMDFIESKNSAAREIALAFGVPPQLLGINGDNTYSNMQEARLALWEETLIPLLDKIADSVSNWFSYLFKEDIIIDFDRDSISALTEKRENLWAKISNANFMTLNEKRAFVGLPPIINGDRL</sequence>
<evidence type="ECO:0000305" key="1"/>
<reference key="1">
    <citation type="journal article" date="2005" name="PLoS Biol.">
        <title>The genome sequence of Rickettsia felis identifies the first putative conjugative plasmid in an obligate intracellular parasite.</title>
        <authorList>
            <person name="Ogata H."/>
            <person name="Renesto P."/>
            <person name="Audic S."/>
            <person name="Robert C."/>
            <person name="Blanc G."/>
            <person name="Fournier P.-E."/>
            <person name="Parinello H."/>
            <person name="Claverie J.-M."/>
            <person name="Raoult D."/>
        </authorList>
    </citation>
    <scope>NUCLEOTIDE SEQUENCE [LARGE SCALE GENOMIC DNA]</scope>
    <source>
        <strain>ATCC VR-1525 / URRWXCal2</strain>
    </source>
</reference>
<accession>Q4UM95</accession>
<gene>
    <name type="ordered locus">RF_0471</name>
</gene>